<protein>
    <recommendedName>
        <fullName evidence="1">UPF0260 protein VCM66_1013</fullName>
    </recommendedName>
</protein>
<name>Y1013_VIBCM</name>
<gene>
    <name type="ordered locus">VCM66_1013</name>
</gene>
<proteinExistence type="inferred from homology"/>
<reference key="1">
    <citation type="journal article" date="2008" name="PLoS ONE">
        <title>A recalibrated molecular clock and independent origins for the cholera pandemic clones.</title>
        <authorList>
            <person name="Feng L."/>
            <person name="Reeves P.R."/>
            <person name="Lan R."/>
            <person name="Ren Y."/>
            <person name="Gao C."/>
            <person name="Zhou Z."/>
            <person name="Ren Y."/>
            <person name="Cheng J."/>
            <person name="Wang W."/>
            <person name="Wang J."/>
            <person name="Qian W."/>
            <person name="Li D."/>
            <person name="Wang L."/>
        </authorList>
    </citation>
    <scope>NUCLEOTIDE SEQUENCE [LARGE SCALE GENOMIC DNA]</scope>
    <source>
        <strain>M66-2</strain>
    </source>
</reference>
<organism>
    <name type="scientific">Vibrio cholerae serotype O1 (strain M66-2)</name>
    <dbReference type="NCBI Taxonomy" id="579112"/>
    <lineage>
        <taxon>Bacteria</taxon>
        <taxon>Pseudomonadati</taxon>
        <taxon>Pseudomonadota</taxon>
        <taxon>Gammaproteobacteria</taxon>
        <taxon>Vibrionales</taxon>
        <taxon>Vibrionaceae</taxon>
        <taxon>Vibrio</taxon>
    </lineage>
</organism>
<accession>C3LTV5</accession>
<evidence type="ECO:0000255" key="1">
    <source>
        <dbReference type="HAMAP-Rule" id="MF_00676"/>
    </source>
</evidence>
<feature type="chain" id="PRO_1000147705" description="UPF0260 protein VCM66_1013">
    <location>
        <begin position="1"/>
        <end position="145"/>
    </location>
</feature>
<comment type="similarity">
    <text evidence="1">Belongs to the UPF0260 family.</text>
</comment>
<dbReference type="EMBL" id="CP001233">
    <property type="protein sequence ID" value="ACP05331.1"/>
    <property type="molecule type" value="Genomic_DNA"/>
</dbReference>
<dbReference type="RefSeq" id="WP_001880862.1">
    <property type="nucleotide sequence ID" value="NC_012578.1"/>
</dbReference>
<dbReference type="KEGG" id="vcm:VCM66_1013"/>
<dbReference type="HOGENOM" id="CLU_109769_0_1_6"/>
<dbReference type="Proteomes" id="UP000001217">
    <property type="component" value="Chromosome I"/>
</dbReference>
<dbReference type="HAMAP" id="MF_00676">
    <property type="entry name" value="UPF0260"/>
    <property type="match status" value="1"/>
</dbReference>
<dbReference type="InterPro" id="IPR005358">
    <property type="entry name" value="Puta_zinc/iron-chelating_dom"/>
</dbReference>
<dbReference type="InterPro" id="IPR008228">
    <property type="entry name" value="UCP006173"/>
</dbReference>
<dbReference type="NCBIfam" id="NF003501">
    <property type="entry name" value="PRK05170.1-5"/>
    <property type="match status" value="1"/>
</dbReference>
<dbReference type="NCBIfam" id="NF003503">
    <property type="entry name" value="PRK05170.2-1"/>
    <property type="match status" value="1"/>
</dbReference>
<dbReference type="NCBIfam" id="NF003507">
    <property type="entry name" value="PRK05170.2-5"/>
    <property type="match status" value="1"/>
</dbReference>
<dbReference type="PANTHER" id="PTHR37421">
    <property type="entry name" value="UPF0260 PROTEIN YCGN"/>
    <property type="match status" value="1"/>
</dbReference>
<dbReference type="PANTHER" id="PTHR37421:SF1">
    <property type="entry name" value="UPF0260 PROTEIN YCGN"/>
    <property type="match status" value="1"/>
</dbReference>
<dbReference type="Pfam" id="PF03692">
    <property type="entry name" value="CxxCxxCC"/>
    <property type="match status" value="1"/>
</dbReference>
<dbReference type="PIRSF" id="PIRSF006173">
    <property type="entry name" value="UCP006173"/>
    <property type="match status" value="1"/>
</dbReference>
<sequence>MSTPFWQSKTLDQMTEAEWESLCDGCGKCCLHKLMDEDTDEIYYTNVACSWLNSDTCSCKDYPNRFSSGEECLKLTRDKIEEFNWLPDTCAYRLLGNGQTLPEWHPLLTGSKDAMHAADESVRGKIVYEVDVIDWEDHIVLMSRD</sequence>